<feature type="signal peptide" evidence="3">
    <location>
        <begin position="1"/>
        <end position="20"/>
    </location>
</feature>
<feature type="propeptide" id="PRO_0000434045" evidence="2">
    <location>
        <begin position="21"/>
        <end position="81"/>
    </location>
</feature>
<feature type="chain" id="PRO_0000001035" description="Agouti-related protein">
    <location>
        <begin position="82"/>
        <end position="131"/>
    </location>
</feature>
<feature type="domain" description="Agouti" evidence="4">
    <location>
        <begin position="86"/>
        <end position="128"/>
    </location>
</feature>
<feature type="region of interest" description="Interaction with melanocortin receptors" evidence="1">
    <location>
        <begin position="110"/>
        <end position="112"/>
    </location>
</feature>
<feature type="site" description="Cleavage; by PCSK1" evidence="2">
    <location>
        <begin position="81"/>
        <end position="82"/>
    </location>
</feature>
<feature type="disulfide bond" evidence="2 4">
    <location>
        <begin position="86"/>
        <end position="101"/>
    </location>
</feature>
<feature type="disulfide bond" evidence="2 4">
    <location>
        <begin position="93"/>
        <end position="107"/>
    </location>
</feature>
<feature type="disulfide bond" evidence="2 4">
    <location>
        <begin position="100"/>
        <end position="118"/>
    </location>
</feature>
<feature type="disulfide bond" evidence="2 4">
    <location>
        <begin position="104"/>
        <end position="128"/>
    </location>
</feature>
<feature type="disulfide bond" evidence="2 4">
    <location>
        <begin position="109"/>
        <end position="116"/>
    </location>
</feature>
<dbReference type="EMBL" id="U89484">
    <property type="protein sequence ID" value="AAB68620.1"/>
    <property type="molecule type" value="mRNA"/>
</dbReference>
<dbReference type="EMBL" id="U89486">
    <property type="protein sequence ID" value="AAB68622.1"/>
    <property type="molecule type" value="Genomic_DNA"/>
</dbReference>
<dbReference type="EMBL" id="BC079902">
    <property type="protein sequence ID" value="AAH79902.1"/>
    <property type="molecule type" value="mRNA"/>
</dbReference>
<dbReference type="CCDS" id="CCDS22605.1"/>
<dbReference type="RefSeq" id="NP_001258735.1">
    <property type="nucleotide sequence ID" value="NM_001271806.1"/>
</dbReference>
<dbReference type="RefSeq" id="NP_031453.1">
    <property type="nucleotide sequence ID" value="NM_007427.3"/>
</dbReference>
<dbReference type="SMR" id="P56473"/>
<dbReference type="FunCoup" id="P56473">
    <property type="interactions" value="45"/>
</dbReference>
<dbReference type="STRING" id="10090.ENSMUSP00000142044"/>
<dbReference type="PaxDb" id="10090-ENSMUSP00000005849"/>
<dbReference type="ProteomicsDB" id="282043"/>
<dbReference type="Antibodypedia" id="29554">
    <property type="antibodies" value="309 antibodies from 31 providers"/>
</dbReference>
<dbReference type="DNASU" id="11604"/>
<dbReference type="Ensembl" id="ENSMUST00000005849.11">
    <property type="protein sequence ID" value="ENSMUSP00000005849.6"/>
    <property type="gene ID" value="ENSMUSG00000005705.11"/>
</dbReference>
<dbReference type="Ensembl" id="ENSMUST00000194091.6">
    <property type="protein sequence ID" value="ENSMUSP00000142044.2"/>
    <property type="gene ID" value="ENSMUSG00000005705.11"/>
</dbReference>
<dbReference type="GeneID" id="11604"/>
<dbReference type="KEGG" id="mmu:11604"/>
<dbReference type="UCSC" id="uc009ndh.2">
    <property type="organism name" value="mouse"/>
</dbReference>
<dbReference type="AGR" id="MGI:892013"/>
<dbReference type="CTD" id="181"/>
<dbReference type="MGI" id="MGI:892013">
    <property type="gene designation" value="Agrp"/>
</dbReference>
<dbReference type="VEuPathDB" id="HostDB:ENSMUSG00000005705"/>
<dbReference type="eggNOG" id="ENOG502S7K0">
    <property type="taxonomic scope" value="Eukaryota"/>
</dbReference>
<dbReference type="GeneTree" id="ENSGT00940000154258"/>
<dbReference type="HOGENOM" id="CLU_103790_0_0_1"/>
<dbReference type="InParanoid" id="P56473"/>
<dbReference type="OMA" id="SWAMLQG"/>
<dbReference type="OrthoDB" id="9942042at2759"/>
<dbReference type="PhylomeDB" id="P56473"/>
<dbReference type="TreeFam" id="TF330729"/>
<dbReference type="BioGRID-ORCS" id="11604">
    <property type="hits" value="0 hits in 76 CRISPR screens"/>
</dbReference>
<dbReference type="ChiTaRS" id="Agrp">
    <property type="organism name" value="mouse"/>
</dbReference>
<dbReference type="PRO" id="PR:P56473"/>
<dbReference type="Proteomes" id="UP000000589">
    <property type="component" value="Chromosome 8"/>
</dbReference>
<dbReference type="RNAct" id="P56473">
    <property type="molecule type" value="protein"/>
</dbReference>
<dbReference type="Bgee" id="ENSMUSG00000005705">
    <property type="expression patterns" value="Expressed in median eminence of neurohypophysis and 67 other cell types or tissues"/>
</dbReference>
<dbReference type="ExpressionAtlas" id="P56473">
    <property type="expression patterns" value="baseline and differential"/>
</dbReference>
<dbReference type="GO" id="GO:0005576">
    <property type="term" value="C:extracellular region"/>
    <property type="evidence" value="ECO:0000304"/>
    <property type="project" value="Reactome"/>
</dbReference>
<dbReference type="GO" id="GO:0005615">
    <property type="term" value="C:extracellular space"/>
    <property type="evidence" value="ECO:0000250"/>
    <property type="project" value="UniProtKB"/>
</dbReference>
<dbReference type="GO" id="GO:0005796">
    <property type="term" value="C:Golgi lumen"/>
    <property type="evidence" value="ECO:0000250"/>
    <property type="project" value="UniProtKB"/>
</dbReference>
<dbReference type="GO" id="GO:0043025">
    <property type="term" value="C:neuronal cell body"/>
    <property type="evidence" value="ECO:0007669"/>
    <property type="project" value="Ensembl"/>
</dbReference>
<dbReference type="GO" id="GO:0005184">
    <property type="term" value="F:neuropeptide hormone activity"/>
    <property type="evidence" value="ECO:0000314"/>
    <property type="project" value="MGI"/>
</dbReference>
<dbReference type="GO" id="GO:0031781">
    <property type="term" value="F:type 3 melanocortin receptor binding"/>
    <property type="evidence" value="ECO:0000250"/>
    <property type="project" value="UniProtKB"/>
</dbReference>
<dbReference type="GO" id="GO:0031782">
    <property type="term" value="F:type 4 melanocortin receptor binding"/>
    <property type="evidence" value="ECO:0000250"/>
    <property type="project" value="UniProtKB"/>
</dbReference>
<dbReference type="GO" id="GO:0008343">
    <property type="term" value="P:adult feeding behavior"/>
    <property type="evidence" value="ECO:0000314"/>
    <property type="project" value="MGI"/>
</dbReference>
<dbReference type="GO" id="GO:0007623">
    <property type="term" value="P:circadian rhythm"/>
    <property type="evidence" value="ECO:0007669"/>
    <property type="project" value="Ensembl"/>
</dbReference>
<dbReference type="GO" id="GO:0042755">
    <property type="term" value="P:eating behavior"/>
    <property type="evidence" value="ECO:0007669"/>
    <property type="project" value="Ensembl"/>
</dbReference>
<dbReference type="GO" id="GO:0009755">
    <property type="term" value="P:hormone-mediated signaling pathway"/>
    <property type="evidence" value="ECO:0007669"/>
    <property type="project" value="InterPro"/>
</dbReference>
<dbReference type="GO" id="GO:0048571">
    <property type="term" value="P:long-day photoperiodism"/>
    <property type="evidence" value="ECO:0007669"/>
    <property type="project" value="Ensembl"/>
</dbReference>
<dbReference type="GO" id="GO:0060135">
    <property type="term" value="P:maternal process involved in female pregnancy"/>
    <property type="evidence" value="ECO:0007669"/>
    <property type="project" value="Ensembl"/>
</dbReference>
<dbReference type="GO" id="GO:0007218">
    <property type="term" value="P:neuropeptide signaling pathway"/>
    <property type="evidence" value="ECO:0000314"/>
    <property type="project" value="MGI"/>
</dbReference>
<dbReference type="GO" id="GO:2000253">
    <property type="term" value="P:positive regulation of feeding behavior"/>
    <property type="evidence" value="ECO:0007669"/>
    <property type="project" value="Ensembl"/>
</dbReference>
<dbReference type="GO" id="GO:0060259">
    <property type="term" value="P:regulation of feeding behavior"/>
    <property type="evidence" value="ECO:0000250"/>
    <property type="project" value="UniProtKB"/>
</dbReference>
<dbReference type="GO" id="GO:0032868">
    <property type="term" value="P:response to insulin"/>
    <property type="evidence" value="ECO:0007669"/>
    <property type="project" value="Ensembl"/>
</dbReference>
<dbReference type="FunFam" id="4.10.760.10:FF:000003">
    <property type="entry name" value="Agouti-related peptide 2"/>
    <property type="match status" value="1"/>
</dbReference>
<dbReference type="Gene3D" id="4.10.760.10">
    <property type="entry name" value="Agouti domain"/>
    <property type="match status" value="1"/>
</dbReference>
<dbReference type="InterPro" id="IPR007733">
    <property type="entry name" value="Agouti"/>
</dbReference>
<dbReference type="InterPro" id="IPR027300">
    <property type="entry name" value="Agouti_dom"/>
</dbReference>
<dbReference type="InterPro" id="IPR036836">
    <property type="entry name" value="Agouti_dom_sf"/>
</dbReference>
<dbReference type="PANTHER" id="PTHR16551">
    <property type="entry name" value="AGOUTI RELATED"/>
    <property type="match status" value="1"/>
</dbReference>
<dbReference type="PANTHER" id="PTHR16551:SF4">
    <property type="entry name" value="AGOUTI-RELATED PROTEIN"/>
    <property type="match status" value="1"/>
</dbReference>
<dbReference type="Pfam" id="PF05039">
    <property type="entry name" value="Agouti"/>
    <property type="match status" value="1"/>
</dbReference>
<dbReference type="SMART" id="SM00792">
    <property type="entry name" value="Agouti"/>
    <property type="match status" value="1"/>
</dbReference>
<dbReference type="SUPFAM" id="SSF57055">
    <property type="entry name" value="Agouti-related protein"/>
    <property type="match status" value="1"/>
</dbReference>
<dbReference type="PROSITE" id="PS60024">
    <property type="entry name" value="AGOUTI_1"/>
    <property type="match status" value="1"/>
</dbReference>
<dbReference type="PROSITE" id="PS51150">
    <property type="entry name" value="AGOUTI_2"/>
    <property type="match status" value="1"/>
</dbReference>
<reference key="1">
    <citation type="journal article" date="1997" name="Science">
        <title>Antagonism of central melanocortin receptors in vitro and in vivo by agouti-related protein.</title>
        <authorList>
            <person name="Ollmann M.M."/>
            <person name="Wilson B.D."/>
            <person name="Yang Y.K."/>
            <person name="Kerns J.A."/>
            <person name="Chen Y."/>
            <person name="Gantz I."/>
            <person name="Barsh G.S."/>
        </authorList>
    </citation>
    <scope>NUCLEOTIDE SEQUENCE</scope>
    <source>
        <strain>129</strain>
    </source>
</reference>
<reference key="2">
    <citation type="journal article" date="1997" name="Genes Dev.">
        <title>Hypothalamic expression of ART, a novel gene related to agouti, is up-regulated in obese and diabetic mutant mice.</title>
        <authorList>
            <person name="Shutter J.R."/>
            <person name="Graham M."/>
            <person name="Kinsey A.C."/>
            <person name="Scully S."/>
            <person name="Luethy R."/>
            <person name="Stark K.L."/>
        </authorList>
    </citation>
    <scope>NUCLEOTIDE SEQUENCE</scope>
</reference>
<reference key="3">
    <citation type="journal article" date="2004" name="Genome Res.">
        <title>The status, quality, and expansion of the NIH full-length cDNA project: the Mammalian Gene Collection (MGC).</title>
        <authorList>
            <consortium name="The MGC Project Team"/>
        </authorList>
    </citation>
    <scope>NUCLEOTIDE SEQUENCE [LARGE SCALE MRNA]</scope>
    <source>
        <strain>C57BL/6J</strain>
        <tissue>Eye</tissue>
    </source>
</reference>
<reference key="4">
    <citation type="journal article" date="1999" name="Mol. Endocrinol.">
        <title>Characterization of Agouti-related protein binding to melanocortin receptors.</title>
        <authorList>
            <person name="Yang Y.K."/>
            <person name="Thompson D.A."/>
            <person name="Dickinson C.J."/>
            <person name="Wilken J."/>
            <person name="Barsh G.S."/>
            <person name="Kent S.B."/>
            <person name="Gantz I."/>
        </authorList>
    </citation>
    <scope>FUNCTION</scope>
    <scope>INTERACTION WITH MELANOCORTIN RECEPTORS MC3R; MC4R AND MC5R</scope>
</reference>
<accession>P56473</accession>
<accession>O35967</accession>
<proteinExistence type="evidence at protein level"/>
<evidence type="ECO:0000250" key="1"/>
<evidence type="ECO:0000250" key="2">
    <source>
        <dbReference type="UniProtKB" id="O00253"/>
    </source>
</evidence>
<evidence type="ECO:0000255" key="3"/>
<evidence type="ECO:0000255" key="4">
    <source>
        <dbReference type="PROSITE-ProRule" id="PRU00494"/>
    </source>
</evidence>
<evidence type="ECO:0000269" key="5">
    <source>
    </source>
</evidence>
<keyword id="KW-1015">Disulfide bond</keyword>
<keyword id="KW-0333">Golgi apparatus</keyword>
<keyword id="KW-0960">Knottin</keyword>
<keyword id="KW-1185">Reference proteome</keyword>
<keyword id="KW-0964">Secreted</keyword>
<keyword id="KW-0732">Signal</keyword>
<organism>
    <name type="scientific">Mus musculus</name>
    <name type="common">Mouse</name>
    <dbReference type="NCBI Taxonomy" id="10090"/>
    <lineage>
        <taxon>Eukaryota</taxon>
        <taxon>Metazoa</taxon>
        <taxon>Chordata</taxon>
        <taxon>Craniata</taxon>
        <taxon>Vertebrata</taxon>
        <taxon>Euteleostomi</taxon>
        <taxon>Mammalia</taxon>
        <taxon>Eutheria</taxon>
        <taxon>Euarchontoglires</taxon>
        <taxon>Glires</taxon>
        <taxon>Rodentia</taxon>
        <taxon>Myomorpha</taxon>
        <taxon>Muroidea</taxon>
        <taxon>Muridae</taxon>
        <taxon>Murinae</taxon>
        <taxon>Mus</taxon>
        <taxon>Mus</taxon>
    </lineage>
</organism>
<comment type="function">
    <text evidence="1 5">Plays a role in weight homeostasis. Involved in the control of feeding behavior through the central melanocortin system. Acts as alpha melanocyte-stimulating hormone antagonist by inhibiting cAMP production mediated by stimulation of melanocortin receptors within the hypothalamus and adrenal gland. Has very low activity with MC5R. Is an inverse agonist for MC3R and MC4R being able to suppress their constitutive activity (By similarity). It promotes MC3R and MC4R endocytosis in an arrestin-dependent manner (By similarity).</text>
</comment>
<comment type="subunit">
    <text evidence="5">Interacts with melanocortin receptors MC3R, MC4R and MC5R.</text>
</comment>
<comment type="subcellular location">
    <subcellularLocation>
        <location evidence="2">Secreted</location>
    </subcellularLocation>
    <subcellularLocation>
        <location evidence="2">Golgi apparatus lumen</location>
    </subcellularLocation>
</comment>
<comment type="tissue specificity">
    <text>Expressed in arcuate nucleus and median eminence, adrenal gland (medulla), hypothalamus, testis, and lung.</text>
</comment>
<comment type="induction">
    <text>Hypothalamic expression is elevated circa 10-fold in ob/ob and db/db mice.</text>
</comment>
<comment type="domain">
    <text evidence="2">The presence of a 'disulfide through disulfide knot' structurally defines this protein as a knottin.</text>
</comment>
<protein>
    <recommendedName>
        <fullName>Agouti-related protein</fullName>
    </recommendedName>
</protein>
<gene>
    <name type="primary">Agrp</name>
    <name type="synonym">Agrt</name>
    <name type="synonym">Art</name>
</gene>
<sequence>MLTAMLLSCVLLLALPPTLGVQMGVAPLKGIRRPDQALFPEFPGLSLNGLKKTTADRAEEVLLQKAEALAEVLDPQNRESRSPRRCVRLHESCLGQQVPCCDPCATCYCRFFNAFCYCRKLGTATNLCSRT</sequence>
<name>AGRP_MOUSE</name>